<feature type="chain" id="PRO_0000095744" description="Translation initiation factor IF-1 2">
    <location>
        <begin position="1"/>
        <end position="87"/>
    </location>
</feature>
<feature type="domain" description="S1-like" evidence="1">
    <location>
        <begin position="1"/>
        <end position="72"/>
    </location>
</feature>
<feature type="region of interest" description="Disordered" evidence="2">
    <location>
        <begin position="66"/>
        <end position="87"/>
    </location>
</feature>
<organism>
    <name type="scientific">Bordetella bronchiseptica (strain ATCC BAA-588 / NCTC 13252 / RB50)</name>
    <name type="common">Alcaligenes bronchisepticus</name>
    <dbReference type="NCBI Taxonomy" id="257310"/>
    <lineage>
        <taxon>Bacteria</taxon>
        <taxon>Pseudomonadati</taxon>
        <taxon>Pseudomonadota</taxon>
        <taxon>Betaproteobacteria</taxon>
        <taxon>Burkholderiales</taxon>
        <taxon>Alcaligenaceae</taxon>
        <taxon>Bordetella</taxon>
    </lineage>
</organism>
<evidence type="ECO:0000255" key="1">
    <source>
        <dbReference type="HAMAP-Rule" id="MF_00075"/>
    </source>
</evidence>
<evidence type="ECO:0000256" key="2">
    <source>
        <dbReference type="SAM" id="MobiDB-lite"/>
    </source>
</evidence>
<comment type="function">
    <text evidence="1">One of the essential components for the initiation of protein synthesis. Stabilizes the binding of IF-2 and IF-3 on the 30S subunit to which N-formylmethionyl-tRNA(fMet) subsequently binds. Helps modulate mRNA selection, yielding the 30S pre-initiation complex (PIC). Upon addition of the 50S ribosomal subunit IF-1, IF-2 and IF-3 are released leaving the mature 70S translation initiation complex.</text>
</comment>
<comment type="subunit">
    <text evidence="1">Component of the 30S ribosomal translation pre-initiation complex which assembles on the 30S ribosome in the order IF-2 and IF-3, IF-1 and N-formylmethionyl-tRNA(fMet); mRNA recruitment can occur at any time during PIC assembly.</text>
</comment>
<comment type="subcellular location">
    <subcellularLocation>
        <location evidence="1">Cytoplasm</location>
    </subcellularLocation>
</comment>
<comment type="similarity">
    <text evidence="1">Belongs to the IF-1 family.</text>
</comment>
<protein>
    <recommendedName>
        <fullName evidence="1">Translation initiation factor IF-1 2</fullName>
    </recommendedName>
</protein>
<reference key="1">
    <citation type="journal article" date="2003" name="Nat. Genet.">
        <title>Comparative analysis of the genome sequences of Bordetella pertussis, Bordetella parapertussis and Bordetella bronchiseptica.</title>
        <authorList>
            <person name="Parkhill J."/>
            <person name="Sebaihia M."/>
            <person name="Preston A."/>
            <person name="Murphy L.D."/>
            <person name="Thomson N.R."/>
            <person name="Harris D.E."/>
            <person name="Holden M.T.G."/>
            <person name="Churcher C.M."/>
            <person name="Bentley S.D."/>
            <person name="Mungall K.L."/>
            <person name="Cerdeno-Tarraga A.-M."/>
            <person name="Temple L."/>
            <person name="James K.D."/>
            <person name="Harris B."/>
            <person name="Quail M.A."/>
            <person name="Achtman M."/>
            <person name="Atkin R."/>
            <person name="Baker S."/>
            <person name="Basham D."/>
            <person name="Bason N."/>
            <person name="Cherevach I."/>
            <person name="Chillingworth T."/>
            <person name="Collins M."/>
            <person name="Cronin A."/>
            <person name="Davis P."/>
            <person name="Doggett J."/>
            <person name="Feltwell T."/>
            <person name="Goble A."/>
            <person name="Hamlin N."/>
            <person name="Hauser H."/>
            <person name="Holroyd S."/>
            <person name="Jagels K."/>
            <person name="Leather S."/>
            <person name="Moule S."/>
            <person name="Norberczak H."/>
            <person name="O'Neil S."/>
            <person name="Ormond D."/>
            <person name="Price C."/>
            <person name="Rabbinowitsch E."/>
            <person name="Rutter S."/>
            <person name="Sanders M."/>
            <person name="Saunders D."/>
            <person name="Seeger K."/>
            <person name="Sharp S."/>
            <person name="Simmonds M."/>
            <person name="Skelton J."/>
            <person name="Squares R."/>
            <person name="Squares S."/>
            <person name="Stevens K."/>
            <person name="Unwin L."/>
            <person name="Whitehead S."/>
            <person name="Barrell B.G."/>
            <person name="Maskell D.J."/>
        </authorList>
    </citation>
    <scope>NUCLEOTIDE SEQUENCE [LARGE SCALE GENOMIC DNA]</scope>
    <source>
        <strain>ATCC BAA-588 / NCTC 13252 / RB50</strain>
    </source>
</reference>
<gene>
    <name evidence="1" type="primary">infA2</name>
    <name type="ordered locus">BB1400</name>
</gene>
<name>IF12_BORBR</name>
<proteinExistence type="inferred from homology"/>
<dbReference type="EMBL" id="BX640441">
    <property type="protein sequence ID" value="CAE31898.1"/>
    <property type="molecule type" value="Genomic_DNA"/>
</dbReference>
<dbReference type="SMR" id="Q7WMJ1"/>
<dbReference type="KEGG" id="bbr:BB1400"/>
<dbReference type="eggNOG" id="COG0361">
    <property type="taxonomic scope" value="Bacteria"/>
</dbReference>
<dbReference type="HOGENOM" id="CLU_151267_4_1_4"/>
<dbReference type="Proteomes" id="UP000001027">
    <property type="component" value="Chromosome"/>
</dbReference>
<dbReference type="GO" id="GO:0005829">
    <property type="term" value="C:cytosol"/>
    <property type="evidence" value="ECO:0007669"/>
    <property type="project" value="TreeGrafter"/>
</dbReference>
<dbReference type="GO" id="GO:0043022">
    <property type="term" value="F:ribosome binding"/>
    <property type="evidence" value="ECO:0007669"/>
    <property type="project" value="UniProtKB-UniRule"/>
</dbReference>
<dbReference type="GO" id="GO:0019843">
    <property type="term" value="F:rRNA binding"/>
    <property type="evidence" value="ECO:0007669"/>
    <property type="project" value="UniProtKB-UniRule"/>
</dbReference>
<dbReference type="GO" id="GO:0003743">
    <property type="term" value="F:translation initiation factor activity"/>
    <property type="evidence" value="ECO:0007669"/>
    <property type="project" value="UniProtKB-UniRule"/>
</dbReference>
<dbReference type="CDD" id="cd04451">
    <property type="entry name" value="S1_IF1"/>
    <property type="match status" value="1"/>
</dbReference>
<dbReference type="FunFam" id="2.40.50.140:FF:000002">
    <property type="entry name" value="Translation initiation factor IF-1"/>
    <property type="match status" value="1"/>
</dbReference>
<dbReference type="Gene3D" id="2.40.50.140">
    <property type="entry name" value="Nucleic acid-binding proteins"/>
    <property type="match status" value="1"/>
</dbReference>
<dbReference type="HAMAP" id="MF_00075">
    <property type="entry name" value="IF_1"/>
    <property type="match status" value="1"/>
</dbReference>
<dbReference type="InterPro" id="IPR012340">
    <property type="entry name" value="NA-bd_OB-fold"/>
</dbReference>
<dbReference type="InterPro" id="IPR006196">
    <property type="entry name" value="RNA-binding_domain_S1_IF1"/>
</dbReference>
<dbReference type="InterPro" id="IPR003029">
    <property type="entry name" value="S1_domain"/>
</dbReference>
<dbReference type="InterPro" id="IPR004368">
    <property type="entry name" value="TIF_IF1"/>
</dbReference>
<dbReference type="NCBIfam" id="TIGR00008">
    <property type="entry name" value="infA"/>
    <property type="match status" value="1"/>
</dbReference>
<dbReference type="PANTHER" id="PTHR33370">
    <property type="entry name" value="TRANSLATION INITIATION FACTOR IF-1, CHLOROPLASTIC"/>
    <property type="match status" value="1"/>
</dbReference>
<dbReference type="PANTHER" id="PTHR33370:SF1">
    <property type="entry name" value="TRANSLATION INITIATION FACTOR IF-1, CHLOROPLASTIC"/>
    <property type="match status" value="1"/>
</dbReference>
<dbReference type="Pfam" id="PF01176">
    <property type="entry name" value="eIF-1a"/>
    <property type="match status" value="1"/>
</dbReference>
<dbReference type="SMART" id="SM00316">
    <property type="entry name" value="S1"/>
    <property type="match status" value="1"/>
</dbReference>
<dbReference type="SUPFAM" id="SSF50249">
    <property type="entry name" value="Nucleic acid-binding proteins"/>
    <property type="match status" value="1"/>
</dbReference>
<dbReference type="PROSITE" id="PS50832">
    <property type="entry name" value="S1_IF1_TYPE"/>
    <property type="match status" value="1"/>
</dbReference>
<accession>Q7WMJ1</accession>
<keyword id="KW-0963">Cytoplasm</keyword>
<keyword id="KW-0396">Initiation factor</keyword>
<keyword id="KW-0648">Protein biosynthesis</keyword>
<keyword id="KW-0694">RNA-binding</keyword>
<keyword id="KW-0699">rRNA-binding</keyword>
<sequence>MAKEELIELNGIVDEVLPDSRYRVKLDNGIEVGAYASGRMRKHRIRILAGDRVTLEMSPYDLTKGRINFRHKDERSGPPSRPPQHRR</sequence>